<proteinExistence type="inferred from homology"/>
<reference key="1">
    <citation type="submission" date="2008-08" db="EMBL/GenBank/DDBJ databases">
        <title>Complete sequence of Vibrio fischeri strain MJ11.</title>
        <authorList>
            <person name="Mandel M.J."/>
            <person name="Stabb E.V."/>
            <person name="Ruby E.G."/>
            <person name="Ferriera S."/>
            <person name="Johnson J."/>
            <person name="Kravitz S."/>
            <person name="Beeson K."/>
            <person name="Sutton G."/>
            <person name="Rogers Y.-H."/>
            <person name="Friedman R."/>
            <person name="Frazier M."/>
            <person name="Venter J.C."/>
        </authorList>
    </citation>
    <scope>NUCLEOTIDE SEQUENCE [LARGE SCALE GENOMIC DNA]</scope>
    <source>
        <strain>MJ11</strain>
    </source>
</reference>
<feature type="chain" id="PRO_1000091973" description="DNA-directed RNA polymerase subunit alpha">
    <location>
        <begin position="1"/>
        <end position="329"/>
    </location>
</feature>
<feature type="region of interest" description="Alpha N-terminal domain (alpha-NTD)" evidence="1">
    <location>
        <begin position="1"/>
        <end position="235"/>
    </location>
</feature>
<feature type="region of interest" description="Alpha C-terminal domain (alpha-CTD)" evidence="1">
    <location>
        <begin position="249"/>
        <end position="329"/>
    </location>
</feature>
<comment type="function">
    <text evidence="1">DNA-dependent RNA polymerase catalyzes the transcription of DNA into RNA using the four ribonucleoside triphosphates as substrates.</text>
</comment>
<comment type="catalytic activity">
    <reaction evidence="1">
        <text>RNA(n) + a ribonucleoside 5'-triphosphate = RNA(n+1) + diphosphate</text>
        <dbReference type="Rhea" id="RHEA:21248"/>
        <dbReference type="Rhea" id="RHEA-COMP:14527"/>
        <dbReference type="Rhea" id="RHEA-COMP:17342"/>
        <dbReference type="ChEBI" id="CHEBI:33019"/>
        <dbReference type="ChEBI" id="CHEBI:61557"/>
        <dbReference type="ChEBI" id="CHEBI:140395"/>
        <dbReference type="EC" id="2.7.7.6"/>
    </reaction>
</comment>
<comment type="subunit">
    <text evidence="1">Homodimer. The RNAP catalytic core consists of 2 alpha, 1 beta, 1 beta' and 1 omega subunit. When a sigma factor is associated with the core the holoenzyme is formed, which can initiate transcription.</text>
</comment>
<comment type="domain">
    <text evidence="1">The N-terminal domain is essential for RNAP assembly and basal transcription, whereas the C-terminal domain is involved in interaction with transcriptional regulators and with upstream promoter elements.</text>
</comment>
<comment type="similarity">
    <text evidence="1">Belongs to the RNA polymerase alpha chain family.</text>
</comment>
<name>RPOA_ALIFM</name>
<accession>B5FGE1</accession>
<keyword id="KW-0240">DNA-directed RNA polymerase</keyword>
<keyword id="KW-0548">Nucleotidyltransferase</keyword>
<keyword id="KW-0804">Transcription</keyword>
<keyword id="KW-0808">Transferase</keyword>
<dbReference type="EC" id="2.7.7.6" evidence="1"/>
<dbReference type="EMBL" id="CP001139">
    <property type="protein sequence ID" value="ACH64945.1"/>
    <property type="molecule type" value="Genomic_DNA"/>
</dbReference>
<dbReference type="RefSeq" id="WP_005417271.1">
    <property type="nucleotide sequence ID" value="NC_011184.1"/>
</dbReference>
<dbReference type="SMR" id="B5FGE1"/>
<dbReference type="GeneID" id="54162883"/>
<dbReference type="KEGG" id="vfm:VFMJ11_0250"/>
<dbReference type="HOGENOM" id="CLU_053084_0_0_6"/>
<dbReference type="Proteomes" id="UP000001857">
    <property type="component" value="Chromosome I"/>
</dbReference>
<dbReference type="GO" id="GO:0005737">
    <property type="term" value="C:cytoplasm"/>
    <property type="evidence" value="ECO:0007669"/>
    <property type="project" value="UniProtKB-ARBA"/>
</dbReference>
<dbReference type="GO" id="GO:0000428">
    <property type="term" value="C:DNA-directed RNA polymerase complex"/>
    <property type="evidence" value="ECO:0007669"/>
    <property type="project" value="UniProtKB-KW"/>
</dbReference>
<dbReference type="GO" id="GO:0003677">
    <property type="term" value="F:DNA binding"/>
    <property type="evidence" value="ECO:0007669"/>
    <property type="project" value="UniProtKB-UniRule"/>
</dbReference>
<dbReference type="GO" id="GO:0003899">
    <property type="term" value="F:DNA-directed RNA polymerase activity"/>
    <property type="evidence" value="ECO:0007669"/>
    <property type="project" value="UniProtKB-UniRule"/>
</dbReference>
<dbReference type="GO" id="GO:0046983">
    <property type="term" value="F:protein dimerization activity"/>
    <property type="evidence" value="ECO:0007669"/>
    <property type="project" value="InterPro"/>
</dbReference>
<dbReference type="GO" id="GO:0006351">
    <property type="term" value="P:DNA-templated transcription"/>
    <property type="evidence" value="ECO:0007669"/>
    <property type="project" value="UniProtKB-UniRule"/>
</dbReference>
<dbReference type="CDD" id="cd06928">
    <property type="entry name" value="RNAP_alpha_NTD"/>
    <property type="match status" value="1"/>
</dbReference>
<dbReference type="FunFam" id="1.10.150.20:FF:000001">
    <property type="entry name" value="DNA-directed RNA polymerase subunit alpha"/>
    <property type="match status" value="1"/>
</dbReference>
<dbReference type="FunFam" id="2.170.120.12:FF:000001">
    <property type="entry name" value="DNA-directed RNA polymerase subunit alpha"/>
    <property type="match status" value="1"/>
</dbReference>
<dbReference type="Gene3D" id="1.10.150.20">
    <property type="entry name" value="5' to 3' exonuclease, C-terminal subdomain"/>
    <property type="match status" value="1"/>
</dbReference>
<dbReference type="Gene3D" id="2.170.120.12">
    <property type="entry name" value="DNA-directed RNA polymerase, insert domain"/>
    <property type="match status" value="1"/>
</dbReference>
<dbReference type="Gene3D" id="3.30.1360.10">
    <property type="entry name" value="RNA polymerase, RBP11-like subunit"/>
    <property type="match status" value="1"/>
</dbReference>
<dbReference type="HAMAP" id="MF_00059">
    <property type="entry name" value="RNApol_bact_RpoA"/>
    <property type="match status" value="1"/>
</dbReference>
<dbReference type="InterPro" id="IPR011262">
    <property type="entry name" value="DNA-dir_RNA_pol_insert"/>
</dbReference>
<dbReference type="InterPro" id="IPR011263">
    <property type="entry name" value="DNA-dir_RNA_pol_RpoA/D/Rpb3"/>
</dbReference>
<dbReference type="InterPro" id="IPR011773">
    <property type="entry name" value="DNA-dir_RpoA"/>
</dbReference>
<dbReference type="InterPro" id="IPR036603">
    <property type="entry name" value="RBP11-like"/>
</dbReference>
<dbReference type="InterPro" id="IPR011260">
    <property type="entry name" value="RNAP_asu_C"/>
</dbReference>
<dbReference type="InterPro" id="IPR036643">
    <property type="entry name" value="RNApol_insert_sf"/>
</dbReference>
<dbReference type="NCBIfam" id="NF003513">
    <property type="entry name" value="PRK05182.1-2"/>
    <property type="match status" value="1"/>
</dbReference>
<dbReference type="NCBIfam" id="NF003519">
    <property type="entry name" value="PRK05182.2-5"/>
    <property type="match status" value="1"/>
</dbReference>
<dbReference type="NCBIfam" id="TIGR02027">
    <property type="entry name" value="rpoA"/>
    <property type="match status" value="1"/>
</dbReference>
<dbReference type="Pfam" id="PF01000">
    <property type="entry name" value="RNA_pol_A_bac"/>
    <property type="match status" value="1"/>
</dbReference>
<dbReference type="Pfam" id="PF03118">
    <property type="entry name" value="RNA_pol_A_CTD"/>
    <property type="match status" value="1"/>
</dbReference>
<dbReference type="Pfam" id="PF01193">
    <property type="entry name" value="RNA_pol_L"/>
    <property type="match status" value="1"/>
</dbReference>
<dbReference type="SMART" id="SM00662">
    <property type="entry name" value="RPOLD"/>
    <property type="match status" value="1"/>
</dbReference>
<dbReference type="SUPFAM" id="SSF47789">
    <property type="entry name" value="C-terminal domain of RNA polymerase alpha subunit"/>
    <property type="match status" value="1"/>
</dbReference>
<dbReference type="SUPFAM" id="SSF56553">
    <property type="entry name" value="Insert subdomain of RNA polymerase alpha subunit"/>
    <property type="match status" value="1"/>
</dbReference>
<dbReference type="SUPFAM" id="SSF55257">
    <property type="entry name" value="RBP11-like subunits of RNA polymerase"/>
    <property type="match status" value="1"/>
</dbReference>
<gene>
    <name evidence="1" type="primary">rpoA</name>
    <name type="ordered locus">VFMJ11_0250</name>
</gene>
<organism>
    <name type="scientific">Aliivibrio fischeri (strain MJ11)</name>
    <name type="common">Vibrio fischeri</name>
    <dbReference type="NCBI Taxonomy" id="388396"/>
    <lineage>
        <taxon>Bacteria</taxon>
        <taxon>Pseudomonadati</taxon>
        <taxon>Pseudomonadota</taxon>
        <taxon>Gammaproteobacteria</taxon>
        <taxon>Vibrionales</taxon>
        <taxon>Vibrionaceae</taxon>
        <taxon>Aliivibrio</taxon>
    </lineage>
</organism>
<evidence type="ECO:0000255" key="1">
    <source>
        <dbReference type="HAMAP-Rule" id="MF_00059"/>
    </source>
</evidence>
<protein>
    <recommendedName>
        <fullName evidence="1">DNA-directed RNA polymerase subunit alpha</fullName>
        <shortName evidence="1">RNAP subunit alpha</shortName>
        <ecNumber evidence="1">2.7.7.6</ecNumber>
    </recommendedName>
    <alternativeName>
        <fullName evidence="1">RNA polymerase subunit alpha</fullName>
    </alternativeName>
    <alternativeName>
        <fullName evidence="1">Transcriptase subunit alpha</fullName>
    </alternativeName>
</protein>
<sequence>MQGSVTEFLKPRLVDIEQVSTTHAKVTLEPLERGFGHTLGNALRRILLSSMPGCAVTEVEIEGVLHEYSTKEGVQEDILEILLNLKGLAVKVEGKDEVIITLNKSGAGPVVAGDITHDGDVEIANPEHVICHLTDDNAEISMRIKVERGRGYVPSTARIHTEEDERPIGRLLVDATYSPVDKISYAVEAARVEQRTDLDKLVIDMETNGTLDPEEAIRRAATILAEQLDAFVDLRDVRVPEEKEEKPEFDPILLRPVDDLELTVRSANCLKAEAIHYIGDLVQRTEVELLKTPNLGKKSLTEIKDVLASRGLSLGMRLENWPPASIAED</sequence>